<comment type="function">
    <text>May play a role in sperm development and fertilization This is a non-catalytic metalloprotease-like protein.</text>
</comment>
<comment type="subcellular location">
    <subcellularLocation>
        <location evidence="11">Membrane</location>
        <topology evidence="11">Single-pass type I membrane protein</topology>
    </subcellularLocation>
</comment>
<comment type="alternative products">
    <event type="alternative splicing"/>
    <isoform>
        <id>Q8K410-1</id>
        <name>1</name>
        <sequence type="displayed"/>
    </isoform>
    <isoform>
        <id>Q8K410-2</id>
        <name>2</name>
        <sequence type="described" ref="VSP_012052"/>
    </isoform>
</comment>
<comment type="tissue specificity">
    <text evidence="8 9">Expressed in sperm (at protein level) (PubMed:20945367). Highly expressed in the testis and weakly expressed in the epididymis, brain and heart (PubMed:12568724).</text>
</comment>
<comment type="developmental stage">
    <text evidence="8">Initially expressed in the testis at day 16 and reaches adult expression levels by day 30 after birth.</text>
</comment>
<comment type="sequence caution" evidence="11">
    <conflict type="erroneous initiation">
        <sequence resource="EMBL-CDS" id="AAH60983"/>
    </conflict>
    <text>Truncated N-terminus.</text>
</comment>
<comment type="sequence caution" evidence="11">
    <conflict type="erroneous initiation">
        <sequence resource="EMBL-CDS" id="AAN03858"/>
    </conflict>
    <text>Truncated N-terminus.</text>
</comment>
<dbReference type="EMBL" id="AK005759">
    <property type="protein sequence ID" value="BAC25124.1"/>
    <property type="molecule type" value="mRNA"/>
</dbReference>
<dbReference type="EMBL" id="BC060983">
    <property type="protein sequence ID" value="AAH60983.1"/>
    <property type="status" value="ALT_INIT"/>
    <property type="molecule type" value="mRNA"/>
</dbReference>
<dbReference type="EMBL" id="AF513715">
    <property type="protein sequence ID" value="AAN03858.1"/>
    <property type="status" value="ALT_INIT"/>
    <property type="molecule type" value="mRNA"/>
</dbReference>
<dbReference type="CCDS" id="CCDS40300.2">
    <molecule id="Q8K410-1"/>
</dbReference>
<dbReference type="CCDS" id="CCDS80867.1">
    <molecule id="Q8K410-2"/>
</dbReference>
<dbReference type="RefSeq" id="NP_001280622.1">
    <molecule id="Q8K410-2"/>
    <property type="nucleotide sequence ID" value="NM_001293693.2"/>
</dbReference>
<dbReference type="RefSeq" id="NP_700446.2">
    <molecule id="Q8K410-1"/>
    <property type="nucleotide sequence ID" value="NM_153397.3"/>
</dbReference>
<dbReference type="SMR" id="Q8K410"/>
<dbReference type="BioGRID" id="237267">
    <property type="interactions" value="9"/>
</dbReference>
<dbReference type="STRING" id="10090.ENSMUSP00000113627"/>
<dbReference type="MEROPS" id="M12.960"/>
<dbReference type="GlyCosmos" id="Q8K410">
    <property type="glycosylation" value="5 sites, No reported glycans"/>
</dbReference>
<dbReference type="GlyGen" id="Q8K410">
    <property type="glycosylation" value="5 sites"/>
</dbReference>
<dbReference type="iPTMnet" id="Q8K410"/>
<dbReference type="PhosphoSitePlus" id="Q8K410"/>
<dbReference type="SwissPalm" id="Q8K410"/>
<dbReference type="PaxDb" id="10090-ENSMUSP00000113627"/>
<dbReference type="ProteomicsDB" id="285664">
    <molecule id="Q8K410-1"/>
</dbReference>
<dbReference type="ProteomicsDB" id="285665">
    <molecule id="Q8K410-2"/>
</dbReference>
<dbReference type="Antibodypedia" id="23785">
    <property type="antibodies" value="155 antibodies from 25 providers"/>
</dbReference>
<dbReference type="DNASU" id="353188"/>
<dbReference type="Ensembl" id="ENSMUST00000119720.8">
    <molecule id="Q8K410-2"/>
    <property type="protein sequence ID" value="ENSMUSP00000113076.2"/>
    <property type="gene ID" value="ENSMUSG00000037437.19"/>
</dbReference>
<dbReference type="Ensembl" id="ENSMUST00000121438.9">
    <molecule id="Q8K410-1"/>
    <property type="protein sequence ID" value="ENSMUSP00000113627.3"/>
    <property type="gene ID" value="ENSMUSG00000037437.19"/>
</dbReference>
<dbReference type="GeneID" id="353188"/>
<dbReference type="KEGG" id="mmu:353188"/>
<dbReference type="UCSC" id="uc009lfh.2">
    <molecule id="Q8K410-1"/>
    <property type="organism name" value="mouse"/>
</dbReference>
<dbReference type="UCSC" id="uc009lfi.2">
    <molecule id="Q8K410-2"/>
    <property type="organism name" value="mouse"/>
</dbReference>
<dbReference type="AGR" id="MGI:2653822"/>
<dbReference type="CTD" id="203102"/>
<dbReference type="MGI" id="MGI:2653822">
    <property type="gene designation" value="Adam32"/>
</dbReference>
<dbReference type="VEuPathDB" id="HostDB:ENSMUSG00000037437"/>
<dbReference type="eggNOG" id="KOG3607">
    <property type="taxonomic scope" value="Eukaryota"/>
</dbReference>
<dbReference type="GeneTree" id="ENSGT00940000161015"/>
<dbReference type="HOGENOM" id="CLU_012714_4_3_1"/>
<dbReference type="InParanoid" id="Q8K410"/>
<dbReference type="OMA" id="GWQCLCP"/>
<dbReference type="OrthoDB" id="5951731at2759"/>
<dbReference type="PhylomeDB" id="Q8K410"/>
<dbReference type="TreeFam" id="TF314733"/>
<dbReference type="BioGRID-ORCS" id="353188">
    <property type="hits" value="2 hits in 78 CRISPR screens"/>
</dbReference>
<dbReference type="ChiTaRS" id="Adam32">
    <property type="organism name" value="mouse"/>
</dbReference>
<dbReference type="PRO" id="PR:Q8K410"/>
<dbReference type="Proteomes" id="UP000000589">
    <property type="component" value="Chromosome 8"/>
</dbReference>
<dbReference type="RNAct" id="Q8K410">
    <property type="molecule type" value="protein"/>
</dbReference>
<dbReference type="Bgee" id="ENSMUSG00000037437">
    <property type="expression patterns" value="Expressed in spermatid and 65 other cell types or tissues"/>
</dbReference>
<dbReference type="ExpressionAtlas" id="Q8K410">
    <property type="expression patterns" value="baseline and differential"/>
</dbReference>
<dbReference type="GO" id="GO:0009986">
    <property type="term" value="C:cell surface"/>
    <property type="evidence" value="ECO:0000314"/>
    <property type="project" value="MGI"/>
</dbReference>
<dbReference type="GO" id="GO:0016020">
    <property type="term" value="C:membrane"/>
    <property type="evidence" value="ECO:0007669"/>
    <property type="project" value="UniProtKB-SubCell"/>
</dbReference>
<dbReference type="GO" id="GO:0004222">
    <property type="term" value="F:metalloendopeptidase activity"/>
    <property type="evidence" value="ECO:0007669"/>
    <property type="project" value="InterPro"/>
</dbReference>
<dbReference type="GO" id="GO:0006508">
    <property type="term" value="P:proteolysis"/>
    <property type="evidence" value="ECO:0007669"/>
    <property type="project" value="InterPro"/>
</dbReference>
<dbReference type="CDD" id="cd04269">
    <property type="entry name" value="ZnMc_adamalysin_II_like"/>
    <property type="match status" value="1"/>
</dbReference>
<dbReference type="FunFam" id="4.10.70.10:FF:000003">
    <property type="entry name" value="Disintegrin and metalloproteinase domain-containing protein 17"/>
    <property type="match status" value="1"/>
</dbReference>
<dbReference type="FunFam" id="3.40.390.10:FF:000002">
    <property type="entry name" value="Disintegrin and metalloproteinase domain-containing protein 22"/>
    <property type="match status" value="1"/>
</dbReference>
<dbReference type="Gene3D" id="3.40.390.10">
    <property type="entry name" value="Collagenase (Catalytic Domain)"/>
    <property type="match status" value="1"/>
</dbReference>
<dbReference type="Gene3D" id="4.10.70.10">
    <property type="entry name" value="Disintegrin domain"/>
    <property type="match status" value="1"/>
</dbReference>
<dbReference type="InterPro" id="IPR006586">
    <property type="entry name" value="ADAM_Cys-rich"/>
</dbReference>
<dbReference type="InterPro" id="IPR001762">
    <property type="entry name" value="Disintegrin_dom"/>
</dbReference>
<dbReference type="InterPro" id="IPR036436">
    <property type="entry name" value="Disintegrin_dom_sf"/>
</dbReference>
<dbReference type="InterPro" id="IPR000742">
    <property type="entry name" value="EGF-like_dom"/>
</dbReference>
<dbReference type="InterPro" id="IPR024079">
    <property type="entry name" value="MetalloPept_cat_dom_sf"/>
</dbReference>
<dbReference type="InterPro" id="IPR001590">
    <property type="entry name" value="Peptidase_M12B"/>
</dbReference>
<dbReference type="InterPro" id="IPR002870">
    <property type="entry name" value="Peptidase_M12B_N"/>
</dbReference>
<dbReference type="InterPro" id="IPR034027">
    <property type="entry name" value="Reprolysin_adamalysin"/>
</dbReference>
<dbReference type="PANTHER" id="PTHR11905">
    <property type="entry name" value="ADAM A DISINTEGRIN AND METALLOPROTEASE DOMAIN"/>
    <property type="match status" value="1"/>
</dbReference>
<dbReference type="PANTHER" id="PTHR11905:SF24">
    <property type="entry name" value="DISINTEGRIN AND METALLOPROTEINASE DOMAIN-CONTAINING PROTEIN 32"/>
    <property type="match status" value="1"/>
</dbReference>
<dbReference type="Pfam" id="PF08516">
    <property type="entry name" value="ADAM_CR"/>
    <property type="match status" value="1"/>
</dbReference>
<dbReference type="Pfam" id="PF00200">
    <property type="entry name" value="Disintegrin"/>
    <property type="match status" value="1"/>
</dbReference>
<dbReference type="Pfam" id="PF01562">
    <property type="entry name" value="Pep_M12B_propep"/>
    <property type="match status" value="1"/>
</dbReference>
<dbReference type="Pfam" id="PF01421">
    <property type="entry name" value="Reprolysin"/>
    <property type="match status" value="1"/>
</dbReference>
<dbReference type="SMART" id="SM00608">
    <property type="entry name" value="ACR"/>
    <property type="match status" value="1"/>
</dbReference>
<dbReference type="SMART" id="SM00050">
    <property type="entry name" value="DISIN"/>
    <property type="match status" value="1"/>
</dbReference>
<dbReference type="SUPFAM" id="SSF57552">
    <property type="entry name" value="Blood coagulation inhibitor (disintegrin)"/>
    <property type="match status" value="1"/>
</dbReference>
<dbReference type="SUPFAM" id="SSF55486">
    <property type="entry name" value="Metalloproteases ('zincins'), catalytic domain"/>
    <property type="match status" value="1"/>
</dbReference>
<dbReference type="PROSITE" id="PS50215">
    <property type="entry name" value="ADAM_MEPRO"/>
    <property type="match status" value="1"/>
</dbReference>
<dbReference type="PROSITE" id="PS50214">
    <property type="entry name" value="DISINTEGRIN_2"/>
    <property type="match status" value="1"/>
</dbReference>
<dbReference type="PROSITE" id="PS01186">
    <property type="entry name" value="EGF_2"/>
    <property type="match status" value="1"/>
</dbReference>
<dbReference type="PROSITE" id="PS50026">
    <property type="entry name" value="EGF_3"/>
    <property type="match status" value="1"/>
</dbReference>
<keyword id="KW-0025">Alternative splicing</keyword>
<keyword id="KW-0165">Cleavage on pair of basic residues</keyword>
<keyword id="KW-1015">Disulfide bond</keyword>
<keyword id="KW-0245">EGF-like domain</keyword>
<keyword id="KW-0325">Glycoprotein</keyword>
<keyword id="KW-0472">Membrane</keyword>
<keyword id="KW-0597">Phosphoprotein</keyword>
<keyword id="KW-1185">Reference proteome</keyword>
<keyword id="KW-0732">Signal</keyword>
<keyword id="KW-0812">Transmembrane</keyword>
<keyword id="KW-1133">Transmembrane helix</keyword>
<organism>
    <name type="scientific">Mus musculus</name>
    <name type="common">Mouse</name>
    <dbReference type="NCBI Taxonomy" id="10090"/>
    <lineage>
        <taxon>Eukaryota</taxon>
        <taxon>Metazoa</taxon>
        <taxon>Chordata</taxon>
        <taxon>Craniata</taxon>
        <taxon>Vertebrata</taxon>
        <taxon>Euteleostomi</taxon>
        <taxon>Mammalia</taxon>
        <taxon>Eutheria</taxon>
        <taxon>Euarchontoglires</taxon>
        <taxon>Glires</taxon>
        <taxon>Rodentia</taxon>
        <taxon>Myomorpha</taxon>
        <taxon>Muroidea</taxon>
        <taxon>Muridae</taxon>
        <taxon>Murinae</taxon>
        <taxon>Mus</taxon>
        <taxon>Mus</taxon>
    </lineage>
</organism>
<proteinExistence type="evidence at protein level"/>
<feature type="signal peptide" evidence="3">
    <location>
        <begin position="1"/>
        <end position="22"/>
    </location>
</feature>
<feature type="propeptide" id="PRO_0000029140" evidence="3">
    <location>
        <begin position="23"/>
        <end position="176"/>
    </location>
</feature>
<feature type="chain" id="PRO_0000029141" description="Disintegrin and metalloproteinase domain-containing protein 32">
    <location>
        <begin position="177"/>
        <end position="754"/>
    </location>
</feature>
<feature type="topological domain" description="Extracellular" evidence="3">
    <location>
        <begin position="177"/>
        <end position="689"/>
    </location>
</feature>
<feature type="transmembrane region" description="Helical" evidence="3">
    <location>
        <begin position="690"/>
        <end position="710"/>
    </location>
</feature>
<feature type="topological domain" description="Cytoplasmic" evidence="3">
    <location>
        <begin position="711"/>
        <end position="754"/>
    </location>
</feature>
<feature type="domain" description="Peptidase M12B" evidence="6">
    <location>
        <begin position="187"/>
        <end position="384"/>
    </location>
</feature>
<feature type="domain" description="Disintegrin" evidence="4">
    <location>
        <begin position="391"/>
        <end position="483"/>
    </location>
</feature>
<feature type="domain" description="EGF-like" evidence="5">
    <location>
        <begin position="628"/>
        <end position="660"/>
    </location>
</feature>
<feature type="region of interest" description="Disordered" evidence="7">
    <location>
        <begin position="720"/>
        <end position="754"/>
    </location>
</feature>
<feature type="compositionally biased region" description="Basic and acidic residues" evidence="7">
    <location>
        <begin position="720"/>
        <end position="733"/>
    </location>
</feature>
<feature type="compositionally biased region" description="Low complexity" evidence="7">
    <location>
        <begin position="734"/>
        <end position="754"/>
    </location>
</feature>
<feature type="modified residue" description="Phosphoserine" evidence="2">
    <location>
        <position position="23"/>
    </location>
</feature>
<feature type="glycosylation site" description="N-linked (GlcNAc...) asparagine" evidence="3">
    <location>
        <position position="126"/>
    </location>
</feature>
<feature type="glycosylation site" description="N-linked (GlcNAc...) asparagine" evidence="3">
    <location>
        <position position="362"/>
    </location>
</feature>
<feature type="glycosylation site" description="N-linked (GlcNAc...) asparagine" evidence="3">
    <location>
        <position position="469"/>
    </location>
</feature>
<feature type="glycosylation site" description="N-linked (GlcNAc...) asparagine" evidence="3">
    <location>
        <position position="570"/>
    </location>
</feature>
<feature type="glycosylation site" description="N-linked (GlcNAc...) asparagine" evidence="3">
    <location>
        <position position="571"/>
    </location>
</feature>
<feature type="disulfide bond" evidence="1">
    <location>
        <begin position="296"/>
        <end position="379"/>
    </location>
</feature>
<feature type="disulfide bond" evidence="1">
    <location>
        <begin position="338"/>
        <end position="363"/>
    </location>
</feature>
<feature type="disulfide bond" evidence="1">
    <location>
        <begin position="340"/>
        <end position="345"/>
    </location>
</feature>
<feature type="disulfide bond" evidence="1">
    <location>
        <begin position="454"/>
        <end position="475"/>
    </location>
</feature>
<feature type="disulfide bond" evidence="1">
    <location>
        <begin position="632"/>
        <end position="642"/>
    </location>
</feature>
<feature type="disulfide bond" evidence="1">
    <location>
        <begin position="636"/>
        <end position="648"/>
    </location>
</feature>
<feature type="disulfide bond" evidence="1">
    <location>
        <begin position="650"/>
        <end position="659"/>
    </location>
</feature>
<feature type="splice variant" id="VSP_012052" description="In isoform 2." evidence="10">
    <original>VCNSHGVCHCNAGYSPPNCQYPTTKRSASLWSGKHDLPMERASKNQEKKWLLSLYIVLIILASVFLIGTGWKGLKQCGSKEEESMSSESKSEDSTYTYVSRSTSETSSMTSTSS</original>
    <variation>KQIRRQHLHVCQQVSSLKDGVKRHVENEHHNFQPINF</variation>
    <location>
        <begin position="641"/>
        <end position="754"/>
    </location>
</feature>
<feature type="sequence conflict" description="In Ref. 3; AAN03858." evidence="11" ref="3">
    <original>S</original>
    <variation>I</variation>
    <location>
        <position position="361"/>
    </location>
</feature>
<feature type="sequence conflict" description="In Ref. 2; AAH60983." evidence="11" ref="2">
    <original>E</original>
    <variation>K</variation>
    <location>
        <position position="728"/>
    </location>
</feature>
<reference key="1">
    <citation type="journal article" date="2005" name="Science">
        <title>The transcriptional landscape of the mammalian genome.</title>
        <authorList>
            <person name="Carninci P."/>
            <person name="Kasukawa T."/>
            <person name="Katayama S."/>
            <person name="Gough J."/>
            <person name="Frith M.C."/>
            <person name="Maeda N."/>
            <person name="Oyama R."/>
            <person name="Ravasi T."/>
            <person name="Lenhard B."/>
            <person name="Wells C."/>
            <person name="Kodzius R."/>
            <person name="Shimokawa K."/>
            <person name="Bajic V.B."/>
            <person name="Brenner S.E."/>
            <person name="Batalov S."/>
            <person name="Forrest A.R."/>
            <person name="Zavolan M."/>
            <person name="Davis M.J."/>
            <person name="Wilming L.G."/>
            <person name="Aidinis V."/>
            <person name="Allen J.E."/>
            <person name="Ambesi-Impiombato A."/>
            <person name="Apweiler R."/>
            <person name="Aturaliya R.N."/>
            <person name="Bailey T.L."/>
            <person name="Bansal M."/>
            <person name="Baxter L."/>
            <person name="Beisel K.W."/>
            <person name="Bersano T."/>
            <person name="Bono H."/>
            <person name="Chalk A.M."/>
            <person name="Chiu K.P."/>
            <person name="Choudhary V."/>
            <person name="Christoffels A."/>
            <person name="Clutterbuck D.R."/>
            <person name="Crowe M.L."/>
            <person name="Dalla E."/>
            <person name="Dalrymple B.P."/>
            <person name="de Bono B."/>
            <person name="Della Gatta G."/>
            <person name="di Bernardo D."/>
            <person name="Down T."/>
            <person name="Engstrom P."/>
            <person name="Fagiolini M."/>
            <person name="Faulkner G."/>
            <person name="Fletcher C.F."/>
            <person name="Fukushima T."/>
            <person name="Furuno M."/>
            <person name="Futaki S."/>
            <person name="Gariboldi M."/>
            <person name="Georgii-Hemming P."/>
            <person name="Gingeras T.R."/>
            <person name="Gojobori T."/>
            <person name="Green R.E."/>
            <person name="Gustincich S."/>
            <person name="Harbers M."/>
            <person name="Hayashi Y."/>
            <person name="Hensch T.K."/>
            <person name="Hirokawa N."/>
            <person name="Hill D."/>
            <person name="Huminiecki L."/>
            <person name="Iacono M."/>
            <person name="Ikeo K."/>
            <person name="Iwama A."/>
            <person name="Ishikawa T."/>
            <person name="Jakt M."/>
            <person name="Kanapin A."/>
            <person name="Katoh M."/>
            <person name="Kawasawa Y."/>
            <person name="Kelso J."/>
            <person name="Kitamura H."/>
            <person name="Kitano H."/>
            <person name="Kollias G."/>
            <person name="Krishnan S.P."/>
            <person name="Kruger A."/>
            <person name="Kummerfeld S.K."/>
            <person name="Kurochkin I.V."/>
            <person name="Lareau L.F."/>
            <person name="Lazarevic D."/>
            <person name="Lipovich L."/>
            <person name="Liu J."/>
            <person name="Liuni S."/>
            <person name="McWilliam S."/>
            <person name="Madan Babu M."/>
            <person name="Madera M."/>
            <person name="Marchionni L."/>
            <person name="Matsuda H."/>
            <person name="Matsuzawa S."/>
            <person name="Miki H."/>
            <person name="Mignone F."/>
            <person name="Miyake S."/>
            <person name="Morris K."/>
            <person name="Mottagui-Tabar S."/>
            <person name="Mulder N."/>
            <person name="Nakano N."/>
            <person name="Nakauchi H."/>
            <person name="Ng P."/>
            <person name="Nilsson R."/>
            <person name="Nishiguchi S."/>
            <person name="Nishikawa S."/>
            <person name="Nori F."/>
            <person name="Ohara O."/>
            <person name="Okazaki Y."/>
            <person name="Orlando V."/>
            <person name="Pang K.C."/>
            <person name="Pavan W.J."/>
            <person name="Pavesi G."/>
            <person name="Pesole G."/>
            <person name="Petrovsky N."/>
            <person name="Piazza S."/>
            <person name="Reed J."/>
            <person name="Reid J.F."/>
            <person name="Ring B.Z."/>
            <person name="Ringwald M."/>
            <person name="Rost B."/>
            <person name="Ruan Y."/>
            <person name="Salzberg S.L."/>
            <person name="Sandelin A."/>
            <person name="Schneider C."/>
            <person name="Schoenbach C."/>
            <person name="Sekiguchi K."/>
            <person name="Semple C.A."/>
            <person name="Seno S."/>
            <person name="Sessa L."/>
            <person name="Sheng Y."/>
            <person name="Shibata Y."/>
            <person name="Shimada H."/>
            <person name="Shimada K."/>
            <person name="Silva D."/>
            <person name="Sinclair B."/>
            <person name="Sperling S."/>
            <person name="Stupka E."/>
            <person name="Sugiura K."/>
            <person name="Sultana R."/>
            <person name="Takenaka Y."/>
            <person name="Taki K."/>
            <person name="Tammoja K."/>
            <person name="Tan S.L."/>
            <person name="Tang S."/>
            <person name="Taylor M.S."/>
            <person name="Tegner J."/>
            <person name="Teichmann S.A."/>
            <person name="Ueda H.R."/>
            <person name="van Nimwegen E."/>
            <person name="Verardo R."/>
            <person name="Wei C.L."/>
            <person name="Yagi K."/>
            <person name="Yamanishi H."/>
            <person name="Zabarovsky E."/>
            <person name="Zhu S."/>
            <person name="Zimmer A."/>
            <person name="Hide W."/>
            <person name="Bult C."/>
            <person name="Grimmond S.M."/>
            <person name="Teasdale R.D."/>
            <person name="Liu E.T."/>
            <person name="Brusic V."/>
            <person name="Quackenbush J."/>
            <person name="Wahlestedt C."/>
            <person name="Mattick J.S."/>
            <person name="Hume D.A."/>
            <person name="Kai C."/>
            <person name="Sasaki D."/>
            <person name="Tomaru Y."/>
            <person name="Fukuda S."/>
            <person name="Kanamori-Katayama M."/>
            <person name="Suzuki M."/>
            <person name="Aoki J."/>
            <person name="Arakawa T."/>
            <person name="Iida J."/>
            <person name="Imamura K."/>
            <person name="Itoh M."/>
            <person name="Kato T."/>
            <person name="Kawaji H."/>
            <person name="Kawagashira N."/>
            <person name="Kawashima T."/>
            <person name="Kojima M."/>
            <person name="Kondo S."/>
            <person name="Konno H."/>
            <person name="Nakano K."/>
            <person name="Ninomiya N."/>
            <person name="Nishio T."/>
            <person name="Okada M."/>
            <person name="Plessy C."/>
            <person name="Shibata K."/>
            <person name="Shiraki T."/>
            <person name="Suzuki S."/>
            <person name="Tagami M."/>
            <person name="Waki K."/>
            <person name="Watahiki A."/>
            <person name="Okamura-Oho Y."/>
            <person name="Suzuki H."/>
            <person name="Kawai J."/>
            <person name="Hayashizaki Y."/>
        </authorList>
    </citation>
    <scope>NUCLEOTIDE SEQUENCE [LARGE SCALE MRNA] (ISOFORM 2)</scope>
    <source>
        <strain>C57BL/6J</strain>
        <tissue>Testis</tissue>
    </source>
</reference>
<reference key="2">
    <citation type="journal article" date="2004" name="Genome Res.">
        <title>The status, quality, and expansion of the NIH full-length cDNA project: the Mammalian Gene Collection (MGC).</title>
        <authorList>
            <consortium name="The MGC Project Team"/>
        </authorList>
    </citation>
    <scope>NUCLEOTIDE SEQUENCE [LARGE SCALE MRNA] (ISOFORM 1)</scope>
    <source>
        <tissue>Testis</tissue>
    </source>
</reference>
<reference key="3">
    <citation type="journal article" date="2003" name="Gene">
        <title>Identification and characterization of ADAM32 with testis-predominant gene expression.</title>
        <authorList>
            <person name="Choi I."/>
            <person name="Woo J.-M."/>
            <person name="Hong S."/>
            <person name="Jung Y.-K."/>
            <person name="Kim D.H."/>
            <person name="Cho C."/>
        </authorList>
    </citation>
    <scope>NUCLEOTIDE SEQUENCE [MRNA] OF 4-754 (ISOFORM 1)</scope>
    <scope>TISSUE SPECIFICITY</scope>
    <scope>DEVELOPMENTAL STAGE</scope>
    <source>
        <strain>ICR</strain>
        <tissue>Testis</tissue>
    </source>
</reference>
<reference key="4">
    <citation type="journal article" date="2010" name="Cell">
        <title>A tissue-specific atlas of mouse protein phosphorylation and expression.</title>
        <authorList>
            <person name="Huttlin E.L."/>
            <person name="Jedrychowski M.P."/>
            <person name="Elias J.E."/>
            <person name="Goswami T."/>
            <person name="Rad R."/>
            <person name="Beausoleil S.A."/>
            <person name="Villen J."/>
            <person name="Haas W."/>
            <person name="Sowa M.E."/>
            <person name="Gygi S.P."/>
        </authorList>
    </citation>
    <scope>IDENTIFICATION BY MASS SPECTROMETRY [LARGE SCALE ANALYSIS]</scope>
    <source>
        <tissue>Testis</tissue>
    </source>
</reference>
<reference key="5">
    <citation type="journal article" date="2011" name="J. Cell. Physiol.">
        <title>Identification of heat shock protein 5, calnexin and integral membrane protein 2B as Adam7-interacting membrane proteins in mouse sperm.</title>
        <authorList>
            <person name="Han C."/>
            <person name="Park I."/>
            <person name="Lee B."/>
            <person name="Jin S."/>
            <person name="Choi H."/>
            <person name="Kwon J.T."/>
            <person name="Kwon Y.I."/>
            <person name="Kim D.H."/>
            <person name="Park Z.Y."/>
            <person name="Cho C."/>
        </authorList>
    </citation>
    <scope>TISSUE SPECIFICITY</scope>
</reference>
<gene>
    <name evidence="12" type="primary">Adam32</name>
</gene>
<sequence length="754" mass="83985">MLGAMLHTLLLLLLAELGALLASGPESQSSFLEIIFPEKIEDKTHSEEQISYIIPINKKQYTVHLQKRYFLTNRFMVYMYNQGSTSFHSPNIPAQCYYQGHIKGYPNSVATLSTCSGLRGFLQFENVSYGIEPLQSAFTSQHIVYKLGNKEKELIFNKNSRNIEMPTNYGILINKKPKSPFKNLFPLYLEMSIVVDKALYDYLGSDSNIVTNKIIEIISLINSVFAQLKVTIVLSSLELWSDKNKIPTVGEADELLHKFLEWKQAYLTLRPHDVAYLFIYNEYPNYMGATYPGKMCTAHYSAGITMYPKDMTLEAFSVILTQMLGLSLGISYDEPEKCYCSESICIMNPRAMQYGGVKSFSNCSLNDFEHFKSNEGAKCLQNKPQMQRTAAAVCGNGKVEGDEICDCGSEAECGPDSCCEPNRCVLKAGRACDSKSPSSTCCKNCQFLPEKHQCRPEKHLYCDIPEVCNGSSGNCPPDVTINNGHVCKESGTICYNGDCPDLDRVCESIYGAGSVNAPFACYEEIQGQNDRFGNCGKDNRNRYVFCGWRNLICGRLICTYPTRMPYNPPNNSTASVIYAFVRDKVCITVDFGSSVKEDPLRVANGATCDLDRICLNGVCVESRFLRDQSKTCSSKCHGNGVCNSHGVCHCNAGYSPPNCQYPTTKRSASLWSGKHDLPMERASKNQEKKWLLSLYIVLIILASVFLIGTGWKGLKQCGSKEEESMSSESKSEDSTYTYVSRSTSETSSMTSTSS</sequence>
<accession>Q8K410</accession>
<accession>Q6P901</accession>
<accession>Q8BJ80</accession>
<evidence type="ECO:0000250" key="1"/>
<evidence type="ECO:0000250" key="2">
    <source>
        <dbReference type="UniProtKB" id="Q8TC27"/>
    </source>
</evidence>
<evidence type="ECO:0000255" key="3"/>
<evidence type="ECO:0000255" key="4">
    <source>
        <dbReference type="PROSITE-ProRule" id="PRU00068"/>
    </source>
</evidence>
<evidence type="ECO:0000255" key="5">
    <source>
        <dbReference type="PROSITE-ProRule" id="PRU00076"/>
    </source>
</evidence>
<evidence type="ECO:0000255" key="6">
    <source>
        <dbReference type="PROSITE-ProRule" id="PRU00276"/>
    </source>
</evidence>
<evidence type="ECO:0000256" key="7">
    <source>
        <dbReference type="SAM" id="MobiDB-lite"/>
    </source>
</evidence>
<evidence type="ECO:0000269" key="8">
    <source>
    </source>
</evidence>
<evidence type="ECO:0000269" key="9">
    <source>
    </source>
</evidence>
<evidence type="ECO:0000303" key="10">
    <source>
    </source>
</evidence>
<evidence type="ECO:0000305" key="11"/>
<evidence type="ECO:0000312" key="12">
    <source>
        <dbReference type="MGI" id="MGI:2653822"/>
    </source>
</evidence>
<protein>
    <recommendedName>
        <fullName evidence="12">Disintegrin and metalloproteinase domain-containing protein 32</fullName>
        <shortName>ADAM 32</shortName>
    </recommendedName>
</protein>
<name>ADA32_MOUSE</name>